<reference key="1">
    <citation type="submission" date="1996-06" db="EMBL/GenBank/DDBJ databases">
        <authorList>
            <person name="Schuster W."/>
        </authorList>
    </citation>
    <scope>NUCLEOTIDE SEQUENCE [GENOMIC DNA]</scope>
    <source>
        <strain>cv. C24</strain>
    </source>
</reference>
<reference key="2">
    <citation type="journal article" date="1997" name="Nat. Genet.">
        <title>The mitochondrial genome of Arabidopsis thaliana contains 57 genes in 366,924 nucleotides.</title>
        <authorList>
            <person name="Unseld M."/>
            <person name="Marienfeld J.R."/>
            <person name="Brandt P."/>
            <person name="Brennicke A."/>
        </authorList>
    </citation>
    <scope>NUCLEOTIDE SEQUENCE [LARGE SCALE GENOMIC DNA]</scope>
    <source>
        <strain>cv. C24</strain>
    </source>
</reference>
<reference key="3">
    <citation type="journal article" date="1999" name="Nature">
        <title>Sequence and analysis of chromosome 2 of the plant Arabidopsis thaliana.</title>
        <authorList>
            <person name="Lin X."/>
            <person name="Kaul S."/>
            <person name="Rounsley S.D."/>
            <person name="Shea T.P."/>
            <person name="Benito M.-I."/>
            <person name="Town C.D."/>
            <person name="Fujii C.Y."/>
            <person name="Mason T.M."/>
            <person name="Bowman C.L."/>
            <person name="Barnstead M.E."/>
            <person name="Feldblyum T.V."/>
            <person name="Buell C.R."/>
            <person name="Ketchum K.A."/>
            <person name="Lee J.J."/>
            <person name="Ronning C.M."/>
            <person name="Koo H.L."/>
            <person name="Moffat K.S."/>
            <person name="Cronin L.A."/>
            <person name="Shen M."/>
            <person name="Pai G."/>
            <person name="Van Aken S."/>
            <person name="Umayam L."/>
            <person name="Tallon L.J."/>
            <person name="Gill J.E."/>
            <person name="Adams M.D."/>
            <person name="Carrera A.J."/>
            <person name="Creasy T.H."/>
            <person name="Goodman H.M."/>
            <person name="Somerville C.R."/>
            <person name="Copenhaver G.P."/>
            <person name="Preuss D."/>
            <person name="Nierman W.C."/>
            <person name="White O."/>
            <person name="Eisen J.A."/>
            <person name="Salzberg S.L."/>
            <person name="Fraser C.M."/>
            <person name="Venter J.C."/>
        </authorList>
    </citation>
    <scope>NUCLEOTIDE SEQUENCE [LARGE SCALE GENOMIC DNA] (AT2G07783)</scope>
    <source>
        <strain>cv. Columbia</strain>
    </source>
</reference>
<reference key="4">
    <citation type="journal article" date="2017" name="Plant J.">
        <title>Araport11: a complete reannotation of the Arabidopsis thaliana reference genome.</title>
        <authorList>
            <person name="Cheng C.Y."/>
            <person name="Krishnakumar V."/>
            <person name="Chan A.P."/>
            <person name="Thibaud-Nissen F."/>
            <person name="Schobel S."/>
            <person name="Town C.D."/>
        </authorList>
    </citation>
    <scope>GENOME REANNOTATION (AT2G07783)</scope>
    <source>
        <strain>cv. Columbia</strain>
    </source>
</reference>
<reference key="5">
    <citation type="journal article" date="2008" name="Genetics">
        <title>Genetic architecture of mitochondrial editing in Arabidopsis thaliana.</title>
        <authorList>
            <person name="Bentolila S."/>
            <person name="Elliott L.E."/>
            <person name="Hanson M.R."/>
        </authorList>
    </citation>
    <scope>NUCLEOTIDE SEQUENCE [MRNA] OF 9-184</scope>
    <scope>RNA EDITING</scope>
    <source>
        <strain>cv. Columbia</strain>
        <strain>cv. Landsberg erecta</strain>
        <tissue>Rosette leaf</tissue>
    </source>
</reference>
<reference key="6">
    <citation type="journal article" date="1999" name="Proc. Natl. Acad. Sci. U.S.A.">
        <title>RNA editing in Arabidopsis mitochondria effects 441 C to U changes in ORFs.</title>
        <authorList>
            <person name="Giege P."/>
            <person name="Brennicke A."/>
        </authorList>
    </citation>
    <scope>RNA EDITING</scope>
</reference>
<reference key="7">
    <citation type="journal article" date="2008" name="J. Biol. Chem.">
        <title>The three mitochondrial encoded CcmF proteins form a complex that interacts with CCMH and c-type apocytochromes in Arabidopsis.</title>
        <authorList>
            <person name="Rayapuram N."/>
            <person name="Hagenmuller J."/>
            <person name="Grienenberger J.M."/>
            <person name="Bonnard G."/>
            <person name="Giege P."/>
        </authorList>
    </citation>
    <scope>FUNCTION</scope>
    <scope>INTERACTION WITH CCMFN2 AND CCMH</scope>
    <scope>SUBCELLULAR LOCATION</scope>
</reference>
<evidence type="ECO:0000255" key="1"/>
<evidence type="ECO:0000269" key="2">
    <source>
    </source>
</evidence>
<evidence type="ECO:0000269" key="3">
    <source>
    </source>
</evidence>
<evidence type="ECO:0000269" key="4">
    <source>
    </source>
</evidence>
<evidence type="ECO:0000303" key="5">
    <source>
    </source>
</evidence>
<evidence type="ECO:0000305" key="6"/>
<evidence type="ECO:0000312" key="7">
    <source>
        <dbReference type="Araport" id="AT2G07783"/>
    </source>
</evidence>
<evidence type="ECO:0000312" key="8">
    <source>
        <dbReference type="Araport" id="ATMG00830"/>
    </source>
</evidence>
<evidence type="ECO:0000312" key="9">
    <source>
        <dbReference type="EMBL" id="CAA69825.3"/>
    </source>
</evidence>
<name>CCMF1_ARATH</name>
<comment type="function">
    <text evidence="4">Forms a complex with CCMFC, CCMFN2 and CCMH that performs the assembly of heme with c-type apocytochromes in mitochondria.</text>
</comment>
<comment type="subunit">
    <text evidence="4">Interacts with CCMFN2 and CCMH.</text>
</comment>
<comment type="interaction">
    <interactant intactId="EBI-1797466">
        <id>Q9T6H8</id>
    </interactant>
    <interactant intactId="EBI-763400">
        <id>Q33884</id>
        <label>CCMFN2</label>
    </interactant>
    <organismsDiffer>false</organismsDiffer>
    <experiments>5</experiments>
</comment>
<comment type="subcellular location">
    <subcellularLocation>
        <location evidence="4">Mitochondrion inner membrane</location>
        <topology evidence="1">Multi-pass membrane protein</topology>
    </subcellularLocation>
</comment>
<comment type="RNA editing">
    <location>
        <position position="15" evidence="2 3"/>
    </location>
    <location>
        <position position="35" evidence="2 3"/>
    </location>
    <location>
        <position position="48" evidence="2 3"/>
    </location>
    <location>
        <position position="53" evidence="2 3"/>
    </location>
    <location>
        <position position="67" evidence="2 3"/>
    </location>
    <location>
        <position position="88" evidence="2 3"/>
    </location>
    <location>
        <position position="90" evidence="2 3"/>
    </location>
    <location>
        <position position="97" evidence="2 3"/>
    </location>
    <location>
        <position position="114" evidence="2 3"/>
    </location>
    <location>
        <position position="124" evidence="2 3"/>
    </location>
    <location>
        <position position="135" evidence="2 3"/>
    </location>
    <location>
        <position position="162" evidence="2 3"/>
    </location>
    <location>
        <position position="194" evidence="2 3"/>
    </location>
    <location>
        <position position="237" evidence="2 3"/>
    </location>
    <location>
        <position position="240" evidence="2 3"/>
    </location>
    <location>
        <position position="260" evidence="2 3"/>
    </location>
    <location>
        <position position="264" evidence="2 3"/>
    </location>
    <location>
        <position position="269" evidence="2 3"/>
    </location>
    <location>
        <position position="319" evidence="2 3"/>
    </location>
</comment>
<comment type="miscellaneous">
    <text>A stretch of 270 kb of the mitochondrial genome is duplicated within the centromere of chromosome 2 resulting in the duplication of the gene. The expression of the duplicated gene (At2g07783) is not demonstrated. It is also probably not RNA edited and therefore differs in all the positions known to be edited.</text>
</comment>
<comment type="similarity">
    <text evidence="6">Belongs to the CcmF/CycK/Ccl1/NrfE/CcsA family.</text>
</comment>
<comment type="sequence caution" evidence="6">
    <conflict type="miscellaneous discrepancy">
        <sequence resource="EMBL-CDS" id="CAA66908"/>
    </conflict>
    <text>Its N-terminal part is produced after trans-splicing. No experimental data confirms this assertion.</text>
</comment>
<sequence length="382" mass="43647">MSISIYEFFHYSLFLGLFVAFTYNKKQPPAFGAALAFWCILLSFLGLLFCHISNNLSNYNVLTANALFFYQISGTWSNHEGSILLWCWILNFYGFFFCYRGRPQSHNVLKQGGYRESLFFFFVLNFVKNSILSLLRYEQESGLKNQLYTPFVLRTLVDSELCSRRNRTFDGPALFYAPLYPERKIKNPLDAWRFRGSREGKRTHPLLHLARDDKERASSIDEQRIDGALGIALFFSFFLLASSDPFVRNFFVCTEPLAELNPVLQDPILAIHPPCIYAGDVASAEGFGLCRSKMMNGIVALHSPPMRKDAAEKNGTLLCSAGCVGSRITSELFTLKFKHVGAKCYPALLLRSNRSPLMLLRRRFFAFSSFWAGARSHSTKRY</sequence>
<keyword id="KW-0201">Cytochrome c-type biogenesis</keyword>
<keyword id="KW-0472">Membrane</keyword>
<keyword id="KW-0496">Mitochondrion</keyword>
<keyword id="KW-0999">Mitochondrion inner membrane</keyword>
<keyword id="KW-1185">Reference proteome</keyword>
<keyword id="KW-0691">RNA editing</keyword>
<keyword id="KW-0812">Transmembrane</keyword>
<keyword id="KW-1133">Transmembrane helix</keyword>
<organism>
    <name type="scientific">Arabidopsis thaliana</name>
    <name type="common">Mouse-ear cress</name>
    <dbReference type="NCBI Taxonomy" id="3702"/>
    <lineage>
        <taxon>Eukaryota</taxon>
        <taxon>Viridiplantae</taxon>
        <taxon>Streptophyta</taxon>
        <taxon>Embryophyta</taxon>
        <taxon>Tracheophyta</taxon>
        <taxon>Spermatophyta</taxon>
        <taxon>Magnoliopsida</taxon>
        <taxon>eudicotyledons</taxon>
        <taxon>Gunneridae</taxon>
        <taxon>Pentapetalae</taxon>
        <taxon>rosids</taxon>
        <taxon>malvids</taxon>
        <taxon>Brassicales</taxon>
        <taxon>Brassicaceae</taxon>
        <taxon>Camelineae</taxon>
        <taxon>Arabidopsis</taxon>
    </lineage>
</organism>
<feature type="chain" id="PRO_0000201594" description="Cytochrome c biogenesis CcmF N-terminal-like mitochondrial protein 1">
    <location>
        <begin position="1"/>
        <end position="382"/>
    </location>
</feature>
<feature type="transmembrane region" description="Helical" evidence="1">
    <location>
        <begin position="1"/>
        <end position="21"/>
    </location>
</feature>
<feature type="transmembrane region" description="Helical" evidence="1">
    <location>
        <begin position="30"/>
        <end position="50"/>
    </location>
</feature>
<feature type="transmembrane region" description="Helical" evidence="1">
    <location>
        <begin position="79"/>
        <end position="99"/>
    </location>
</feature>
<feature type="transmembrane region" description="Helical" evidence="1">
    <location>
        <begin position="117"/>
        <end position="137"/>
    </location>
</feature>
<geneLocation type="mitochondrion"/>
<protein>
    <recommendedName>
        <fullName evidence="6">Cytochrome c biogenesis CcmF N-terminal-like mitochondrial protein 1</fullName>
    </recommendedName>
    <alternativeName>
        <fullName evidence="9">Cytochrome c biogenesis orf382</fullName>
    </alternativeName>
</protein>
<proteinExistence type="evidence at protein level"/>
<gene>
    <name evidence="5" type="primary">CCMFN1</name>
    <name type="synonym">CC6BN1</name>
    <name evidence="9" type="synonym">CCB382</name>
    <name evidence="8" type="ordered locus">AtMg00830</name>
</gene>
<gene>
    <name evidence="7" type="ordered locus">At2g07783</name>
</gene>
<accession>Q9T6H8</accession>
<accession>A7KNF5</accession>
<accession>O03601</accession>
<accession>Q1ZXZ2</accession>
<accession>Q31706</accession>
<dbReference type="EMBL" id="X98254">
    <property type="protein sequence ID" value="CAA66908.1"/>
    <property type="status" value="ALT_SEQ"/>
    <property type="molecule type" value="Genomic_DNA"/>
</dbReference>
<dbReference type="EMBL" id="Y08501">
    <property type="protein sequence ID" value="CAA69825.3"/>
    <property type="status" value="ALT_SEQ"/>
    <property type="molecule type" value="Genomic_DNA"/>
</dbReference>
<dbReference type="EMBL" id="AC007143">
    <property type="status" value="NOT_ANNOTATED_CDS"/>
    <property type="molecule type" value="Genomic_DNA"/>
</dbReference>
<dbReference type="EMBL" id="AC007730">
    <property type="status" value="NOT_ANNOTATED_CDS"/>
    <property type="molecule type" value="Genomic_DNA"/>
</dbReference>
<dbReference type="EMBL" id="CP002685">
    <property type="status" value="NOT_ANNOTATED_CDS"/>
    <property type="molecule type" value="Genomic_DNA"/>
</dbReference>
<dbReference type="EMBL" id="EF488898">
    <property type="protein sequence ID" value="ABS50610.1"/>
    <property type="molecule type" value="mRNA"/>
</dbReference>
<dbReference type="EMBL" id="EF488899">
    <property type="protein sequence ID" value="ABS50611.1"/>
    <property type="molecule type" value="mRNA"/>
</dbReference>
<dbReference type="PIR" id="S71281">
    <property type="entry name" value="S71281"/>
</dbReference>
<dbReference type="RefSeq" id="NP_085539.2">
    <property type="nucleotide sequence ID" value="NC_001284.2"/>
</dbReference>
<dbReference type="FunCoup" id="Q9T6H8">
    <property type="interactions" value="2"/>
</dbReference>
<dbReference type="IntAct" id="Q9T6H8">
    <property type="interactions" value="3"/>
</dbReference>
<dbReference type="STRING" id="3702.Q9T6H8"/>
<dbReference type="PaxDb" id="3702-ATMG00830.1"/>
<dbReference type="PeptideAtlas" id="Q9T6H8"/>
<dbReference type="Araport" id="AT2G07783"/>
<dbReference type="Araport" id="ATMG00830"/>
<dbReference type="TAIR" id="AT2G07783"/>
<dbReference type="TAIR" id="ATMG00830">
    <property type="gene designation" value="CCB382"/>
</dbReference>
<dbReference type="eggNOG" id="ENOG502QQ5D">
    <property type="taxonomic scope" value="Eukaryota"/>
</dbReference>
<dbReference type="InParanoid" id="Q9T6H8"/>
<dbReference type="PRO" id="PR:Q9T6H8"/>
<dbReference type="Proteomes" id="UP000006548">
    <property type="component" value="Chromosome 2"/>
</dbReference>
<dbReference type="ExpressionAtlas" id="Q9T6H8">
    <property type="expression patterns" value="baseline and differential"/>
</dbReference>
<dbReference type="GO" id="GO:0005743">
    <property type="term" value="C:mitochondrial inner membrane"/>
    <property type="evidence" value="ECO:0000314"/>
    <property type="project" value="UniProtKB"/>
</dbReference>
<dbReference type="GO" id="GO:0015232">
    <property type="term" value="F:heme transmembrane transporter activity"/>
    <property type="evidence" value="ECO:0007669"/>
    <property type="project" value="InterPro"/>
</dbReference>
<dbReference type="GO" id="GO:0017004">
    <property type="term" value="P:cytochrome complex assembly"/>
    <property type="evidence" value="ECO:0007669"/>
    <property type="project" value="UniProtKB-KW"/>
</dbReference>
<dbReference type="InterPro" id="IPR003567">
    <property type="entry name" value="Cyt_c_biogenesis"/>
</dbReference>
<dbReference type="InterPro" id="IPR003569">
    <property type="entry name" value="Cyt_c_biogenesis_plant"/>
</dbReference>
<dbReference type="PANTHER" id="PTHR43653">
    <property type="entry name" value="CYTOCHROME C ASSEMBLY PROTEIN-RELATED"/>
    <property type="match status" value="1"/>
</dbReference>
<dbReference type="PANTHER" id="PTHR43653:SF1">
    <property type="entry name" value="CYTOCHROME C-TYPE BIOGENESIS PROTEIN CCMF"/>
    <property type="match status" value="1"/>
</dbReference>
<dbReference type="PRINTS" id="PR01410">
    <property type="entry name" value="CCBIOGENESIS"/>
</dbReference>
<dbReference type="PRINTS" id="PR01412">
    <property type="entry name" value="CCBSBIOGNSIS"/>
</dbReference>